<feature type="chain" id="PRO_0000268911" description="Sigma factor-binding protein Crl">
    <location>
        <begin position="1"/>
        <end position="129"/>
    </location>
</feature>
<feature type="region of interest" description="Essential for activity" evidence="1">
    <location>
        <begin position="99"/>
        <end position="119"/>
    </location>
</feature>
<accession>Q8DF92</accession>
<keyword id="KW-0010">Activator</keyword>
<keyword id="KW-0963">Cytoplasm</keyword>
<keyword id="KW-0804">Transcription</keyword>
<keyword id="KW-0805">Transcription regulation</keyword>
<gene>
    <name evidence="1" type="primary">crl</name>
    <name type="ordered locus">VV1_0327</name>
</gene>
<reference key="1">
    <citation type="submission" date="2002-12" db="EMBL/GenBank/DDBJ databases">
        <title>Complete genome sequence of Vibrio vulnificus CMCP6.</title>
        <authorList>
            <person name="Rhee J.H."/>
            <person name="Kim S.Y."/>
            <person name="Chung S.S."/>
            <person name="Kim J.J."/>
            <person name="Moon Y.H."/>
            <person name="Jeong H."/>
            <person name="Choy H.E."/>
        </authorList>
    </citation>
    <scope>NUCLEOTIDE SEQUENCE [LARGE SCALE GENOMIC DNA]</scope>
    <source>
        <strain>CMCP6</strain>
    </source>
</reference>
<evidence type="ECO:0000255" key="1">
    <source>
        <dbReference type="HAMAP-Rule" id="MF_01178"/>
    </source>
</evidence>
<comment type="function">
    <text evidence="1">Binds to the sigma-S subunit of RNA polymerase, activating expression of sigma-S-regulated genes. Stimulates RNA polymerase holoenzyme formation and may bind to several other sigma factors, such as sigma-70 and sigma-32.</text>
</comment>
<comment type="subcellular location">
    <subcellularLocation>
        <location evidence="1">Cytoplasm</location>
    </subcellularLocation>
</comment>
<comment type="similarity">
    <text evidence="1">Belongs to the Crl family.</text>
</comment>
<dbReference type="EMBL" id="AE016795">
    <property type="protein sequence ID" value="AAO08856.2"/>
    <property type="molecule type" value="Genomic_DNA"/>
</dbReference>
<dbReference type="RefSeq" id="WP_011078431.1">
    <property type="nucleotide sequence ID" value="NC_004459.3"/>
</dbReference>
<dbReference type="SMR" id="Q8DF92"/>
<dbReference type="GeneID" id="93894668"/>
<dbReference type="KEGG" id="vvu:VV1_0327"/>
<dbReference type="HOGENOM" id="CLU_136773_1_0_6"/>
<dbReference type="Proteomes" id="UP000002275">
    <property type="component" value="Chromosome 1"/>
</dbReference>
<dbReference type="GO" id="GO:0005737">
    <property type="term" value="C:cytoplasm"/>
    <property type="evidence" value="ECO:0007669"/>
    <property type="project" value="UniProtKB-SubCell"/>
</dbReference>
<dbReference type="GO" id="GO:0045893">
    <property type="term" value="P:positive regulation of DNA-templated transcription"/>
    <property type="evidence" value="ECO:0007669"/>
    <property type="project" value="UniProtKB-UniRule"/>
</dbReference>
<dbReference type="Gene3D" id="3.30.310.230">
    <property type="entry name" value="Sigma factor-binding protein Crl monomer"/>
    <property type="match status" value="1"/>
</dbReference>
<dbReference type="HAMAP" id="MF_01178">
    <property type="entry name" value="Crl"/>
    <property type="match status" value="1"/>
</dbReference>
<dbReference type="InterPro" id="IPR009986">
    <property type="entry name" value="Tscrpt_reg_Crl"/>
</dbReference>
<dbReference type="InterPro" id="IPR038208">
    <property type="entry name" value="Tscrpt_reg_Crl_sf"/>
</dbReference>
<dbReference type="NCBIfam" id="NF008217">
    <property type="entry name" value="PRK10984.1"/>
    <property type="match status" value="1"/>
</dbReference>
<dbReference type="Pfam" id="PF07417">
    <property type="entry name" value="Crl"/>
    <property type="match status" value="1"/>
</dbReference>
<organism>
    <name type="scientific">Vibrio vulnificus (strain CMCP6)</name>
    <dbReference type="NCBI Taxonomy" id="216895"/>
    <lineage>
        <taxon>Bacteria</taxon>
        <taxon>Pseudomonadati</taxon>
        <taxon>Pseudomonadota</taxon>
        <taxon>Gammaproteobacteria</taxon>
        <taxon>Vibrionales</taxon>
        <taxon>Vibrionaceae</taxon>
        <taxon>Vibrio</taxon>
    </lineage>
</organism>
<sequence length="129" mass="15062">MSEVTNNPTHNRLLAKLRAMGPYLRDPQSKEGLYYFDCLSVCIDDRKSPELREFWGWWMELEATEGGFTANYHIGKYDVEGNWLDLAIPKNALEEVNKTQNCFHLKLVKTLEENFQLSVAYHEQSVEFV</sequence>
<proteinExistence type="inferred from homology"/>
<protein>
    <recommendedName>
        <fullName evidence="1">Sigma factor-binding protein Crl</fullName>
    </recommendedName>
</protein>
<name>CRL_VIBVU</name>